<sequence length="119" mass="13658">MPRVKRGVTARARHKKIIKLAKGYRGRRNNVYRIAKQAVMRAGQYAYRDRRNKKRVFRALWITRINAAVRQHDMTYSVFINGLKKASIELDRKVLADMAVFDKAAFAAIVQQVKAAVAA</sequence>
<keyword id="KW-0687">Ribonucleoprotein</keyword>
<keyword id="KW-0689">Ribosomal protein</keyword>
<keyword id="KW-0694">RNA-binding</keyword>
<keyword id="KW-0699">rRNA-binding</keyword>
<protein>
    <recommendedName>
        <fullName evidence="1">Large ribosomal subunit protein bL20</fullName>
    </recommendedName>
    <alternativeName>
        <fullName evidence="2">50S ribosomal protein L20</fullName>
    </alternativeName>
</protein>
<proteinExistence type="inferred from homology"/>
<feature type="chain" id="PRO_1000122287" description="Large ribosomal subunit protein bL20">
    <location>
        <begin position="1"/>
        <end position="119"/>
    </location>
</feature>
<gene>
    <name evidence="1" type="primary">rplT</name>
    <name type="ordered locus">Bphyt_2753</name>
</gene>
<name>RL20_PARPJ</name>
<reference key="1">
    <citation type="journal article" date="2011" name="J. Bacteriol.">
        <title>Complete genome sequence of the plant growth-promoting endophyte Burkholderia phytofirmans strain PsJN.</title>
        <authorList>
            <person name="Weilharter A."/>
            <person name="Mitter B."/>
            <person name="Shin M.V."/>
            <person name="Chain P.S."/>
            <person name="Nowak J."/>
            <person name="Sessitsch A."/>
        </authorList>
    </citation>
    <scope>NUCLEOTIDE SEQUENCE [LARGE SCALE GENOMIC DNA]</scope>
    <source>
        <strain>DSM 17436 / LMG 22146 / PsJN</strain>
    </source>
</reference>
<comment type="function">
    <text evidence="1">Binds directly to 23S ribosomal RNA and is necessary for the in vitro assembly process of the 50S ribosomal subunit. It is not involved in the protein synthesizing functions of that subunit.</text>
</comment>
<comment type="similarity">
    <text evidence="1">Belongs to the bacterial ribosomal protein bL20 family.</text>
</comment>
<accession>B2SZF9</accession>
<organism>
    <name type="scientific">Paraburkholderia phytofirmans (strain DSM 17436 / LMG 22146 / PsJN)</name>
    <name type="common">Burkholderia phytofirmans</name>
    <dbReference type="NCBI Taxonomy" id="398527"/>
    <lineage>
        <taxon>Bacteria</taxon>
        <taxon>Pseudomonadati</taxon>
        <taxon>Pseudomonadota</taxon>
        <taxon>Betaproteobacteria</taxon>
        <taxon>Burkholderiales</taxon>
        <taxon>Burkholderiaceae</taxon>
        <taxon>Paraburkholderia</taxon>
    </lineage>
</organism>
<evidence type="ECO:0000255" key="1">
    <source>
        <dbReference type="HAMAP-Rule" id="MF_00382"/>
    </source>
</evidence>
<evidence type="ECO:0000305" key="2"/>
<dbReference type="EMBL" id="CP001052">
    <property type="protein sequence ID" value="ACD17147.1"/>
    <property type="molecule type" value="Genomic_DNA"/>
</dbReference>
<dbReference type="RefSeq" id="WP_006052502.1">
    <property type="nucleotide sequence ID" value="NC_010681.1"/>
</dbReference>
<dbReference type="SMR" id="B2SZF9"/>
<dbReference type="STRING" id="398527.Bphyt_2753"/>
<dbReference type="GeneID" id="97310577"/>
<dbReference type="KEGG" id="bpy:Bphyt_2753"/>
<dbReference type="eggNOG" id="COG0292">
    <property type="taxonomic scope" value="Bacteria"/>
</dbReference>
<dbReference type="HOGENOM" id="CLU_123265_0_1_4"/>
<dbReference type="OrthoDB" id="9808966at2"/>
<dbReference type="Proteomes" id="UP000001739">
    <property type="component" value="Chromosome 1"/>
</dbReference>
<dbReference type="GO" id="GO:1990904">
    <property type="term" value="C:ribonucleoprotein complex"/>
    <property type="evidence" value="ECO:0007669"/>
    <property type="project" value="UniProtKB-KW"/>
</dbReference>
<dbReference type="GO" id="GO:0005840">
    <property type="term" value="C:ribosome"/>
    <property type="evidence" value="ECO:0007669"/>
    <property type="project" value="UniProtKB-KW"/>
</dbReference>
<dbReference type="GO" id="GO:0019843">
    <property type="term" value="F:rRNA binding"/>
    <property type="evidence" value="ECO:0007669"/>
    <property type="project" value="UniProtKB-UniRule"/>
</dbReference>
<dbReference type="GO" id="GO:0003735">
    <property type="term" value="F:structural constituent of ribosome"/>
    <property type="evidence" value="ECO:0007669"/>
    <property type="project" value="InterPro"/>
</dbReference>
<dbReference type="GO" id="GO:0000027">
    <property type="term" value="P:ribosomal large subunit assembly"/>
    <property type="evidence" value="ECO:0007669"/>
    <property type="project" value="UniProtKB-UniRule"/>
</dbReference>
<dbReference type="GO" id="GO:0006412">
    <property type="term" value="P:translation"/>
    <property type="evidence" value="ECO:0007669"/>
    <property type="project" value="InterPro"/>
</dbReference>
<dbReference type="CDD" id="cd07026">
    <property type="entry name" value="Ribosomal_L20"/>
    <property type="match status" value="1"/>
</dbReference>
<dbReference type="FunFam" id="1.10.1900.20:FF:000001">
    <property type="entry name" value="50S ribosomal protein L20"/>
    <property type="match status" value="1"/>
</dbReference>
<dbReference type="Gene3D" id="6.10.160.10">
    <property type="match status" value="1"/>
</dbReference>
<dbReference type="Gene3D" id="1.10.1900.20">
    <property type="entry name" value="Ribosomal protein L20"/>
    <property type="match status" value="1"/>
</dbReference>
<dbReference type="HAMAP" id="MF_00382">
    <property type="entry name" value="Ribosomal_bL20"/>
    <property type="match status" value="1"/>
</dbReference>
<dbReference type="InterPro" id="IPR005813">
    <property type="entry name" value="Ribosomal_bL20"/>
</dbReference>
<dbReference type="InterPro" id="IPR049946">
    <property type="entry name" value="RIBOSOMAL_L20_CS"/>
</dbReference>
<dbReference type="InterPro" id="IPR035566">
    <property type="entry name" value="Ribosomal_protein_bL20_C"/>
</dbReference>
<dbReference type="NCBIfam" id="TIGR01032">
    <property type="entry name" value="rplT_bact"/>
    <property type="match status" value="1"/>
</dbReference>
<dbReference type="PANTHER" id="PTHR10986">
    <property type="entry name" value="39S RIBOSOMAL PROTEIN L20"/>
    <property type="match status" value="1"/>
</dbReference>
<dbReference type="Pfam" id="PF00453">
    <property type="entry name" value="Ribosomal_L20"/>
    <property type="match status" value="1"/>
</dbReference>
<dbReference type="PRINTS" id="PR00062">
    <property type="entry name" value="RIBOSOMALL20"/>
</dbReference>
<dbReference type="SUPFAM" id="SSF74731">
    <property type="entry name" value="Ribosomal protein L20"/>
    <property type="match status" value="1"/>
</dbReference>
<dbReference type="PROSITE" id="PS00937">
    <property type="entry name" value="RIBOSOMAL_L20"/>
    <property type="match status" value="1"/>
</dbReference>